<proteinExistence type="evidence at transcript level"/>
<accession>Q3SZV0</accession>
<sequence>MGTPNDQAVLQAIFNPDSPFGDIVGLDLGEEAEKEVDEGEVFPRAQLEQSKALELQAVIAAEAGDLSTALERFGQAINLLPERASAYNNRAQARRLQGDVAGALEDLERALALSGGRGRTARQGFVQRGLVARLQGRDDDARRDFERAARLGSPFARRQLVLLNPYAALCNRMLADVMGQLRRPCDER</sequence>
<comment type="similarity">
    <text evidence="1">Belongs to the TTC36 family.</text>
</comment>
<keyword id="KW-1185">Reference proteome</keyword>
<keyword id="KW-0677">Repeat</keyword>
<keyword id="KW-0802">TPR repeat</keyword>
<evidence type="ECO:0000305" key="1"/>
<gene>
    <name type="primary">TTC36</name>
</gene>
<feature type="chain" id="PRO_0000332178" description="Tetratricopeptide repeat protein 36">
    <location>
        <begin position="1"/>
        <end position="188"/>
    </location>
</feature>
<feature type="repeat" description="TPR 1">
    <location>
        <begin position="50"/>
        <end position="83"/>
    </location>
</feature>
<feature type="repeat" description="TPR 2">
    <location>
        <begin position="85"/>
        <end position="117"/>
    </location>
</feature>
<feature type="repeat" description="TPR 3">
    <location>
        <begin position="122"/>
        <end position="155"/>
    </location>
</feature>
<protein>
    <recommendedName>
        <fullName>Tetratricopeptide repeat protein 36</fullName>
        <shortName>TPR repeat protein 36</shortName>
    </recommendedName>
</protein>
<dbReference type="EMBL" id="BC102694">
    <property type="protein sequence ID" value="AAI02695.1"/>
    <property type="molecule type" value="mRNA"/>
</dbReference>
<dbReference type="RefSeq" id="NP_001035605.1">
    <property type="nucleotide sequence ID" value="NM_001040515.2"/>
</dbReference>
<dbReference type="SMR" id="Q3SZV0"/>
<dbReference type="FunCoup" id="Q3SZV0">
    <property type="interactions" value="128"/>
</dbReference>
<dbReference type="PaxDb" id="9913-ENSBTAP00000019835"/>
<dbReference type="Ensembl" id="ENSBTAT00000123299.1">
    <property type="protein sequence ID" value="ENSBTAP00000092329.1"/>
    <property type="gene ID" value="ENSBTAG00000062297.1"/>
</dbReference>
<dbReference type="GeneID" id="510592"/>
<dbReference type="KEGG" id="bta:510592"/>
<dbReference type="CTD" id="143941"/>
<dbReference type="eggNOG" id="KOG4555">
    <property type="taxonomic scope" value="Eukaryota"/>
</dbReference>
<dbReference type="GeneTree" id="ENSGT00390000007968"/>
<dbReference type="HOGENOM" id="CLU_1464567_0_0_1"/>
<dbReference type="InParanoid" id="Q3SZV0"/>
<dbReference type="OrthoDB" id="539634at2759"/>
<dbReference type="TreeFam" id="TF105820"/>
<dbReference type="Proteomes" id="UP000009136">
    <property type="component" value="Chromosome 15"/>
</dbReference>
<dbReference type="GO" id="GO:0006570">
    <property type="term" value="P:tyrosine metabolic process"/>
    <property type="evidence" value="ECO:0000318"/>
    <property type="project" value="GO_Central"/>
</dbReference>
<dbReference type="FunFam" id="1.25.40.10:FF:000213">
    <property type="entry name" value="Tetratricopeptide repeat domain 36"/>
    <property type="match status" value="1"/>
</dbReference>
<dbReference type="Gene3D" id="1.25.40.10">
    <property type="entry name" value="Tetratricopeptide repeat domain"/>
    <property type="match status" value="1"/>
</dbReference>
<dbReference type="InterPro" id="IPR011990">
    <property type="entry name" value="TPR-like_helical_dom_sf"/>
</dbReference>
<dbReference type="InterPro" id="IPR013105">
    <property type="entry name" value="TPR_2"/>
</dbReference>
<dbReference type="InterPro" id="IPR019734">
    <property type="entry name" value="TPR_rpt"/>
</dbReference>
<dbReference type="InterPro" id="IPR038906">
    <property type="entry name" value="TTC36"/>
</dbReference>
<dbReference type="PANTHER" id="PTHR21405">
    <property type="entry name" value="CDNA SEQUENCE BC021608"/>
    <property type="match status" value="1"/>
</dbReference>
<dbReference type="PANTHER" id="PTHR21405:SF0">
    <property type="entry name" value="TETRATRICOPEPTIDE REPEAT PROTEIN 36"/>
    <property type="match status" value="1"/>
</dbReference>
<dbReference type="Pfam" id="PF07719">
    <property type="entry name" value="TPR_2"/>
    <property type="match status" value="1"/>
</dbReference>
<dbReference type="SMART" id="SM00028">
    <property type="entry name" value="TPR"/>
    <property type="match status" value="3"/>
</dbReference>
<dbReference type="SUPFAM" id="SSF48452">
    <property type="entry name" value="TPR-like"/>
    <property type="match status" value="1"/>
</dbReference>
<dbReference type="PROSITE" id="PS50005">
    <property type="entry name" value="TPR"/>
    <property type="match status" value="3"/>
</dbReference>
<dbReference type="PROSITE" id="PS50293">
    <property type="entry name" value="TPR_REGION"/>
    <property type="match status" value="1"/>
</dbReference>
<name>TTC36_BOVIN</name>
<reference key="1">
    <citation type="submission" date="2005-08" db="EMBL/GenBank/DDBJ databases">
        <authorList>
            <consortium name="NIH - Mammalian Gene Collection (MGC) project"/>
        </authorList>
    </citation>
    <scope>NUCLEOTIDE SEQUENCE [LARGE SCALE MRNA]</scope>
    <source>
        <strain>Hereford</strain>
        <tissue>Testis</tissue>
    </source>
</reference>
<organism>
    <name type="scientific">Bos taurus</name>
    <name type="common">Bovine</name>
    <dbReference type="NCBI Taxonomy" id="9913"/>
    <lineage>
        <taxon>Eukaryota</taxon>
        <taxon>Metazoa</taxon>
        <taxon>Chordata</taxon>
        <taxon>Craniata</taxon>
        <taxon>Vertebrata</taxon>
        <taxon>Euteleostomi</taxon>
        <taxon>Mammalia</taxon>
        <taxon>Eutheria</taxon>
        <taxon>Laurasiatheria</taxon>
        <taxon>Artiodactyla</taxon>
        <taxon>Ruminantia</taxon>
        <taxon>Pecora</taxon>
        <taxon>Bovidae</taxon>
        <taxon>Bovinae</taxon>
        <taxon>Bos</taxon>
    </lineage>
</organism>